<evidence type="ECO:0000255" key="1">
    <source>
        <dbReference type="HAMAP-Rule" id="MF_03222"/>
    </source>
</evidence>
<evidence type="ECO:0000269" key="2">
    <source>
    </source>
</evidence>
<evidence type="ECO:0000269" key="3">
    <source>
    </source>
</evidence>
<evidence type="ECO:0000269" key="4">
    <source>
    </source>
</evidence>
<evidence type="ECO:0000269" key="5">
    <source>
    </source>
</evidence>
<evidence type="ECO:0000303" key="6">
    <source>
    </source>
</evidence>
<evidence type="ECO:0000305" key="7">
    <source>
    </source>
</evidence>
<evidence type="ECO:0000312" key="8">
    <source>
        <dbReference type="SGD" id="S000005668"/>
    </source>
</evidence>
<organism>
    <name type="scientific">Saccharomyces cerevisiae (strain ATCC 204508 / S288c)</name>
    <name type="common">Baker's yeast</name>
    <dbReference type="NCBI Taxonomy" id="559292"/>
    <lineage>
        <taxon>Eukaryota</taxon>
        <taxon>Fungi</taxon>
        <taxon>Dikarya</taxon>
        <taxon>Ascomycota</taxon>
        <taxon>Saccharomycotina</taxon>
        <taxon>Saccharomycetes</taxon>
        <taxon>Saccharomycetales</taxon>
        <taxon>Saccharomycetaceae</taxon>
        <taxon>Saccharomyces</taxon>
    </lineage>
</organism>
<accession>P53598</accession>
<accession>D6W2J8</accession>
<sequence length="329" mass="35032">MLRSTVSKASLKICRHFHRESIPYDKTIKNLLLPKDTKVIFQGFTGKQGTFHASISQEYGTNVVGGTNPKKAGQTHLGQPVFASVKDAIKETGATASAIFVPPPIAAAAIKESIEAEIPLAVCITEGIPQHDMLYIAEMLQTQDKTRLVGPNCPGIINPATKVRIGIQPPKIFQAGKIGIISRSGTLTYEAVQQTTKTDLGQSLVIGMGGDAFPGTDFIDALKLFLEDETTEGIIMLGEIGGKAEIEAAQFLKEYNFSRSKPMPVASFIAGTVAGQMKGVRMGHSGAIVEGSGTDAESKKQALRDVGVAVVESPGYLGQALLDQFAKFK</sequence>
<gene>
    <name evidence="6" type="primary">LSC1</name>
    <name evidence="8" type="ordered locus">YOR142W</name>
    <name type="ORF">YOR3352W</name>
</gene>
<comment type="function">
    <text evidence="1 5">Succinyl-CoA synthetase functions in the citric acid cycle (TCA), coupling the hydrolysis of succinyl-CoA to the synthesis of ATP and thus represents the only step of substrate-level phosphorylation in the TCA (PubMed:9874242). The alpha subunit of the enzyme binds the substrates coenzyme A and phosphate, while succinate binding and nucleotide specificity is provided by the beta subunit (By similarity).</text>
</comment>
<comment type="catalytic activity">
    <reaction evidence="1 5">
        <text>succinate + ATP + CoA = succinyl-CoA + ADP + phosphate</text>
        <dbReference type="Rhea" id="RHEA:17661"/>
        <dbReference type="ChEBI" id="CHEBI:30031"/>
        <dbReference type="ChEBI" id="CHEBI:30616"/>
        <dbReference type="ChEBI" id="CHEBI:43474"/>
        <dbReference type="ChEBI" id="CHEBI:57287"/>
        <dbReference type="ChEBI" id="CHEBI:57292"/>
        <dbReference type="ChEBI" id="CHEBI:456216"/>
        <dbReference type="EC" id="6.2.1.5"/>
    </reaction>
</comment>
<comment type="pathway">
    <text evidence="1 7">Carbohydrate metabolism; tricarboxylic acid cycle; succinate from succinyl-CoA (ligase route): step 1/1.</text>
</comment>
<comment type="subunit">
    <text evidence="1">Heterodimer of an alpha and a beta subunit.</text>
</comment>
<comment type="interaction">
    <interactant intactId="EBI-18506">
        <id>P53598</id>
    </interactant>
    <interactant intactId="EBI-18513">
        <id>P53312</id>
        <label>LSC2</label>
    </interactant>
    <organismsDiffer>false</organismsDiffer>
    <experiments>2</experiments>
</comment>
<comment type="subcellular location">
    <subcellularLocation>
        <location evidence="1 2 4">Mitochondrion</location>
    </subcellularLocation>
</comment>
<comment type="induction">
    <text evidence="5">Induced during growth on nonfermentable carbon sources and repressed during growth on glucose.</text>
</comment>
<comment type="miscellaneous">
    <text evidence="3">Present with 18400 molecules/cell in log phase SD medium.</text>
</comment>
<comment type="similarity">
    <text evidence="1">Belongs to the succinate/malate CoA ligase alpha subunit family.</text>
</comment>
<proteinExistence type="evidence at protein level"/>
<feature type="transit peptide" description="Mitochondrion" evidence="1">
    <location>
        <begin position="1"/>
        <end position="24"/>
    </location>
</feature>
<feature type="chain" id="PRO_0000033351" description="Succinate--CoA ligase [ADP-forming] subunit alpha, mitochondrial" evidence="1">
    <location>
        <begin position="25"/>
        <end position="329"/>
    </location>
</feature>
<feature type="active site" description="Tele-phosphohistidine intermediate" evidence="1">
    <location>
        <position position="284"/>
    </location>
</feature>
<feature type="binding site" evidence="1">
    <location>
        <begin position="45"/>
        <end position="48"/>
    </location>
    <ligand>
        <name>CoA</name>
        <dbReference type="ChEBI" id="CHEBI:57287"/>
    </ligand>
</feature>
<feature type="binding site" evidence="1">
    <location>
        <position position="71"/>
    </location>
    <ligand>
        <name>CoA</name>
        <dbReference type="ChEBI" id="CHEBI:57287"/>
    </ligand>
</feature>
<feature type="binding site" evidence="1">
    <location>
        <begin position="124"/>
        <end position="126"/>
    </location>
    <ligand>
        <name>CoA</name>
        <dbReference type="ChEBI" id="CHEBI:57287"/>
    </ligand>
</feature>
<feature type="binding site" evidence="1">
    <location>
        <position position="189"/>
    </location>
    <ligand>
        <name>substrate</name>
        <note>ligand shared with subunit beta</note>
    </ligand>
</feature>
<keyword id="KW-0436">Ligase</keyword>
<keyword id="KW-0496">Mitochondrion</keyword>
<keyword id="KW-0547">Nucleotide-binding</keyword>
<keyword id="KW-1185">Reference proteome</keyword>
<keyword id="KW-0809">Transit peptide</keyword>
<keyword id="KW-0816">Tricarboxylic acid cycle</keyword>
<reference key="1">
    <citation type="journal article" date="1997" name="Yeast">
        <title>DNA sequencing and analysis of 130 kb from yeast chromosome XV.</title>
        <authorList>
            <person name="Voss H."/>
            <person name="Benes V."/>
            <person name="Andrade M.A."/>
            <person name="Valencia A."/>
            <person name="Rechmann S."/>
            <person name="Teodoru C."/>
            <person name="Schwager C."/>
            <person name="Paces V."/>
            <person name="Sander C."/>
            <person name="Ansorge W."/>
        </authorList>
    </citation>
    <scope>NUCLEOTIDE SEQUENCE [GENOMIC DNA]</scope>
</reference>
<reference key="2">
    <citation type="journal article" date="1997" name="Nature">
        <title>The nucleotide sequence of Saccharomyces cerevisiae chromosome XV.</title>
        <authorList>
            <person name="Dujon B."/>
            <person name="Albermann K."/>
            <person name="Aldea M."/>
            <person name="Alexandraki D."/>
            <person name="Ansorge W."/>
            <person name="Arino J."/>
            <person name="Benes V."/>
            <person name="Bohn C."/>
            <person name="Bolotin-Fukuhara M."/>
            <person name="Bordonne R."/>
            <person name="Boyer J."/>
            <person name="Camasses A."/>
            <person name="Casamayor A."/>
            <person name="Casas C."/>
            <person name="Cheret G."/>
            <person name="Cziepluch C."/>
            <person name="Daignan-Fornier B."/>
            <person name="Dang V.-D."/>
            <person name="de Haan M."/>
            <person name="Delius H."/>
            <person name="Durand P."/>
            <person name="Fairhead C."/>
            <person name="Feldmann H."/>
            <person name="Gaillon L."/>
            <person name="Galisson F."/>
            <person name="Gamo F.-J."/>
            <person name="Gancedo C."/>
            <person name="Goffeau A."/>
            <person name="Goulding S.E."/>
            <person name="Grivell L.A."/>
            <person name="Habbig B."/>
            <person name="Hand N.J."/>
            <person name="Hani J."/>
            <person name="Hattenhorst U."/>
            <person name="Hebling U."/>
            <person name="Hernando Y."/>
            <person name="Herrero E."/>
            <person name="Heumann K."/>
            <person name="Hiesel R."/>
            <person name="Hilger F."/>
            <person name="Hofmann B."/>
            <person name="Hollenberg C.P."/>
            <person name="Hughes B."/>
            <person name="Jauniaux J.-C."/>
            <person name="Kalogeropoulos A."/>
            <person name="Katsoulou C."/>
            <person name="Kordes E."/>
            <person name="Lafuente M.J."/>
            <person name="Landt O."/>
            <person name="Louis E.J."/>
            <person name="Maarse A.C."/>
            <person name="Madania A."/>
            <person name="Mannhaupt G."/>
            <person name="Marck C."/>
            <person name="Martin R.P."/>
            <person name="Mewes H.-W."/>
            <person name="Michaux G."/>
            <person name="Paces V."/>
            <person name="Parle-McDermott A.G."/>
            <person name="Pearson B.M."/>
            <person name="Perrin A."/>
            <person name="Pettersson B."/>
            <person name="Poch O."/>
            <person name="Pohl T.M."/>
            <person name="Poirey R."/>
            <person name="Portetelle D."/>
            <person name="Pujol A."/>
            <person name="Purnelle B."/>
            <person name="Ramezani Rad M."/>
            <person name="Rechmann S."/>
            <person name="Schwager C."/>
            <person name="Schweizer M."/>
            <person name="Sor F."/>
            <person name="Sterky F."/>
            <person name="Tarassov I.A."/>
            <person name="Teodoru C."/>
            <person name="Tettelin H."/>
            <person name="Thierry A."/>
            <person name="Tobiasch E."/>
            <person name="Tzermia M."/>
            <person name="Uhlen M."/>
            <person name="Unseld M."/>
            <person name="Valens M."/>
            <person name="Vandenbol M."/>
            <person name="Vetter I."/>
            <person name="Vlcek C."/>
            <person name="Voet M."/>
            <person name="Volckaert G."/>
            <person name="Voss H."/>
            <person name="Wambutt R."/>
            <person name="Wedler H."/>
            <person name="Wiemann S."/>
            <person name="Winsor B."/>
            <person name="Wolfe K.H."/>
            <person name="Zollner A."/>
            <person name="Zumstein E."/>
            <person name="Kleine K."/>
        </authorList>
    </citation>
    <scope>NUCLEOTIDE SEQUENCE [LARGE SCALE GENOMIC DNA]</scope>
    <source>
        <strain>ATCC 204508 / S288c</strain>
    </source>
</reference>
<reference key="3">
    <citation type="journal article" date="2014" name="G3 (Bethesda)">
        <title>The reference genome sequence of Saccharomyces cerevisiae: Then and now.</title>
        <authorList>
            <person name="Engel S.R."/>
            <person name="Dietrich F.S."/>
            <person name="Fisk D.G."/>
            <person name="Binkley G."/>
            <person name="Balakrishnan R."/>
            <person name="Costanzo M.C."/>
            <person name="Dwight S.S."/>
            <person name="Hitz B.C."/>
            <person name="Karra K."/>
            <person name="Nash R.S."/>
            <person name="Weng S."/>
            <person name="Wong E.D."/>
            <person name="Lloyd P."/>
            <person name="Skrzypek M.S."/>
            <person name="Miyasato S.R."/>
            <person name="Simison M."/>
            <person name="Cherry J.M."/>
        </authorList>
    </citation>
    <scope>GENOME REANNOTATION</scope>
    <source>
        <strain>ATCC 204508 / S288c</strain>
    </source>
</reference>
<reference key="4">
    <citation type="journal article" date="1998" name="Eur. J. Biochem.">
        <title>Genes of succinyl-CoA ligase from Saccharomyces cerevisiae.</title>
        <authorList>
            <person name="Przybyla-Zawislak B."/>
            <person name="Dennis R.A."/>
            <person name="Zakharkin S.O."/>
            <person name="McCammon M.T."/>
        </authorList>
    </citation>
    <scope>FUNCTION</scope>
    <scope>CATALYTIC ACTIVITY</scope>
    <scope>INDUCTION</scope>
</reference>
<reference key="5">
    <citation type="journal article" date="2003" name="Nature">
        <title>Global analysis of protein localization in budding yeast.</title>
        <authorList>
            <person name="Huh W.-K."/>
            <person name="Falvo J.V."/>
            <person name="Gerke L.C."/>
            <person name="Carroll A.S."/>
            <person name="Howson R.W."/>
            <person name="Weissman J.S."/>
            <person name="O'Shea E.K."/>
        </authorList>
    </citation>
    <scope>SUBCELLULAR LOCATION [LARGE SCALE ANALYSIS]</scope>
</reference>
<reference key="6">
    <citation type="journal article" date="2003" name="Nature">
        <title>Global analysis of protein expression in yeast.</title>
        <authorList>
            <person name="Ghaemmaghami S."/>
            <person name="Huh W.-K."/>
            <person name="Bower K."/>
            <person name="Howson R.W."/>
            <person name="Belle A."/>
            <person name="Dephoure N."/>
            <person name="O'Shea E.K."/>
            <person name="Weissman J.S."/>
        </authorList>
    </citation>
    <scope>LEVEL OF PROTEIN EXPRESSION [LARGE SCALE ANALYSIS]</scope>
</reference>
<reference key="7">
    <citation type="journal article" date="2003" name="Proc. Natl. Acad. Sci. U.S.A.">
        <title>The proteome of Saccharomyces cerevisiae mitochondria.</title>
        <authorList>
            <person name="Sickmann A."/>
            <person name="Reinders J."/>
            <person name="Wagner Y."/>
            <person name="Joppich C."/>
            <person name="Zahedi R.P."/>
            <person name="Meyer H.E."/>
            <person name="Schoenfisch B."/>
            <person name="Perschil I."/>
            <person name="Chacinska A."/>
            <person name="Guiard B."/>
            <person name="Rehling P."/>
            <person name="Pfanner N."/>
            <person name="Meisinger C."/>
        </authorList>
    </citation>
    <scope>SUBCELLULAR LOCATION [LARGE SCALE ANALYSIS]</scope>
    <source>
        <strain>ATCC 76625 / YPH499</strain>
    </source>
</reference>
<reference key="8">
    <citation type="journal article" date="2007" name="Mol. Cell. Proteomics">
        <title>Profiling phosphoproteins of yeast mitochondria reveals a role of phosphorylation in assembly of the ATP synthase.</title>
        <authorList>
            <person name="Reinders J."/>
            <person name="Wagner K."/>
            <person name="Zahedi R.P."/>
            <person name="Stojanovski D."/>
            <person name="Eyrich B."/>
            <person name="van der Laan M."/>
            <person name="Rehling P."/>
            <person name="Sickmann A."/>
            <person name="Pfanner N."/>
            <person name="Meisinger C."/>
        </authorList>
    </citation>
    <scope>IDENTIFICATION BY MASS SPECTROMETRY [LARGE SCALE ANALYSIS]</scope>
    <source>
        <strain>ATCC 76625 / YPH499</strain>
    </source>
</reference>
<reference key="9">
    <citation type="journal article" date="2008" name="Mol. Cell. Proteomics">
        <title>A multidimensional chromatography technology for in-depth phosphoproteome analysis.</title>
        <authorList>
            <person name="Albuquerque C.P."/>
            <person name="Smolka M.B."/>
            <person name="Payne S.H."/>
            <person name="Bafna V."/>
            <person name="Eng J."/>
            <person name="Zhou H."/>
        </authorList>
    </citation>
    <scope>IDENTIFICATION BY MASS SPECTROMETRY [LARGE SCALE ANALYSIS]</scope>
</reference>
<name>SUCA_YEAST</name>
<dbReference type="EC" id="6.2.1.5" evidence="1 5"/>
<dbReference type="EMBL" id="X94335">
    <property type="protein sequence ID" value="CAA64059.1"/>
    <property type="molecule type" value="Genomic_DNA"/>
</dbReference>
<dbReference type="EMBL" id="Z75050">
    <property type="protein sequence ID" value="CAA99342.1"/>
    <property type="molecule type" value="Genomic_DNA"/>
</dbReference>
<dbReference type="EMBL" id="BK006948">
    <property type="protein sequence ID" value="DAA10914.1"/>
    <property type="molecule type" value="Genomic_DNA"/>
</dbReference>
<dbReference type="PIR" id="S61696">
    <property type="entry name" value="S61696"/>
</dbReference>
<dbReference type="RefSeq" id="NP_014785.3">
    <property type="nucleotide sequence ID" value="NM_001183561.3"/>
</dbReference>
<dbReference type="SMR" id="P53598"/>
<dbReference type="BioGRID" id="34536">
    <property type="interactions" value="184"/>
</dbReference>
<dbReference type="ComplexPortal" id="CPX-1379">
    <property type="entry name" value="Mitochondrial succinyl-CoA synthetase complex"/>
</dbReference>
<dbReference type="DIP" id="DIP-6542N"/>
<dbReference type="FunCoup" id="P53598">
    <property type="interactions" value="1020"/>
</dbReference>
<dbReference type="IntAct" id="P53598">
    <property type="interactions" value="15"/>
</dbReference>
<dbReference type="MINT" id="P53598"/>
<dbReference type="STRING" id="4932.YOR142W"/>
<dbReference type="iPTMnet" id="P53598"/>
<dbReference type="PaxDb" id="4932-YOR142W"/>
<dbReference type="PeptideAtlas" id="P53598"/>
<dbReference type="EnsemblFungi" id="YOR142W_mRNA">
    <property type="protein sequence ID" value="YOR142W"/>
    <property type="gene ID" value="YOR142W"/>
</dbReference>
<dbReference type="GeneID" id="854310"/>
<dbReference type="KEGG" id="sce:YOR142W"/>
<dbReference type="AGR" id="SGD:S000005668"/>
<dbReference type="SGD" id="S000005668">
    <property type="gene designation" value="LSC1"/>
</dbReference>
<dbReference type="VEuPathDB" id="FungiDB:YOR142W"/>
<dbReference type="eggNOG" id="KOG1255">
    <property type="taxonomic scope" value="Eukaryota"/>
</dbReference>
<dbReference type="GeneTree" id="ENSGT00940000156351"/>
<dbReference type="HOGENOM" id="CLU_052104_0_0_1"/>
<dbReference type="InParanoid" id="P53598"/>
<dbReference type="OMA" id="VIICITE"/>
<dbReference type="OrthoDB" id="1664372at2759"/>
<dbReference type="BioCyc" id="YEAST:YOR142W-MONOMER"/>
<dbReference type="Reactome" id="R-SCE-71403">
    <property type="pathway name" value="Citric acid cycle (TCA cycle)"/>
</dbReference>
<dbReference type="UniPathway" id="UPA00223">
    <property type="reaction ID" value="UER00999"/>
</dbReference>
<dbReference type="BioGRID-ORCS" id="854310">
    <property type="hits" value="0 hits in 10 CRISPR screens"/>
</dbReference>
<dbReference type="PRO" id="PR:P53598"/>
<dbReference type="Proteomes" id="UP000002311">
    <property type="component" value="Chromosome XV"/>
</dbReference>
<dbReference type="RNAct" id="P53598">
    <property type="molecule type" value="protein"/>
</dbReference>
<dbReference type="GO" id="GO:0042645">
    <property type="term" value="C:mitochondrial nucleoid"/>
    <property type="evidence" value="ECO:0000314"/>
    <property type="project" value="SGD"/>
</dbReference>
<dbReference type="GO" id="GO:0005739">
    <property type="term" value="C:mitochondrion"/>
    <property type="evidence" value="ECO:0000314"/>
    <property type="project" value="ComplexPortal"/>
</dbReference>
<dbReference type="GO" id="GO:0009361">
    <property type="term" value="C:succinate-CoA ligase complex (ADP-forming)"/>
    <property type="evidence" value="ECO:0000318"/>
    <property type="project" value="GO_Central"/>
</dbReference>
<dbReference type="GO" id="GO:0000166">
    <property type="term" value="F:nucleotide binding"/>
    <property type="evidence" value="ECO:0007669"/>
    <property type="project" value="UniProtKB-KW"/>
</dbReference>
<dbReference type="GO" id="GO:0004775">
    <property type="term" value="F:succinate-CoA ligase (ADP-forming) activity"/>
    <property type="evidence" value="ECO:0007669"/>
    <property type="project" value="UniProtKB-UniRule"/>
</dbReference>
<dbReference type="GO" id="GO:0004776">
    <property type="term" value="F:succinate-CoA ligase (GDP-forming) activity"/>
    <property type="evidence" value="ECO:0000318"/>
    <property type="project" value="GO_Central"/>
</dbReference>
<dbReference type="GO" id="GO:1901289">
    <property type="term" value="P:succinyl-CoA catabolic process"/>
    <property type="evidence" value="ECO:0000303"/>
    <property type="project" value="ComplexPortal"/>
</dbReference>
<dbReference type="GO" id="GO:0006104">
    <property type="term" value="P:succinyl-CoA metabolic process"/>
    <property type="evidence" value="ECO:0000314"/>
    <property type="project" value="SGD"/>
</dbReference>
<dbReference type="GO" id="GO:0006099">
    <property type="term" value="P:tricarboxylic acid cycle"/>
    <property type="evidence" value="ECO:0000318"/>
    <property type="project" value="GO_Central"/>
</dbReference>
<dbReference type="FunFam" id="3.40.50.261:FF:000006">
    <property type="entry name" value="Succinate--CoA ligase [ADP-forming] subunit alpha"/>
    <property type="match status" value="1"/>
</dbReference>
<dbReference type="FunFam" id="3.40.50.720:FF:000002">
    <property type="entry name" value="Succinate--CoA ligase [ADP-forming] subunit alpha"/>
    <property type="match status" value="1"/>
</dbReference>
<dbReference type="Gene3D" id="3.40.50.720">
    <property type="entry name" value="NAD(P)-binding Rossmann-like Domain"/>
    <property type="match status" value="1"/>
</dbReference>
<dbReference type="Gene3D" id="3.40.50.261">
    <property type="entry name" value="Succinyl-CoA synthetase domains"/>
    <property type="match status" value="1"/>
</dbReference>
<dbReference type="HAMAP" id="MF_01988">
    <property type="entry name" value="Succ_CoA_alpha"/>
    <property type="match status" value="1"/>
</dbReference>
<dbReference type="InterPro" id="IPR017440">
    <property type="entry name" value="Cit_synth/succinyl-CoA_lig_AS"/>
</dbReference>
<dbReference type="InterPro" id="IPR033847">
    <property type="entry name" value="Citrt_syn/SCS-alpha_CS"/>
</dbReference>
<dbReference type="InterPro" id="IPR003781">
    <property type="entry name" value="CoA-bd"/>
</dbReference>
<dbReference type="InterPro" id="IPR005810">
    <property type="entry name" value="CoA_lig_alpha"/>
</dbReference>
<dbReference type="InterPro" id="IPR036291">
    <property type="entry name" value="NAD(P)-bd_dom_sf"/>
</dbReference>
<dbReference type="InterPro" id="IPR005811">
    <property type="entry name" value="SUCC_ACL_C"/>
</dbReference>
<dbReference type="InterPro" id="IPR016102">
    <property type="entry name" value="Succinyl-CoA_synth-like"/>
</dbReference>
<dbReference type="NCBIfam" id="NF004230">
    <property type="entry name" value="PRK05678.1"/>
    <property type="match status" value="1"/>
</dbReference>
<dbReference type="PANTHER" id="PTHR11117:SF2">
    <property type="entry name" value="SUCCINATE--COA LIGASE [ADP_GDP-FORMING] SUBUNIT ALPHA, MITOCHONDRIAL"/>
    <property type="match status" value="1"/>
</dbReference>
<dbReference type="PANTHER" id="PTHR11117">
    <property type="entry name" value="SUCCINYL-COA LIGASE SUBUNIT ALPHA"/>
    <property type="match status" value="1"/>
</dbReference>
<dbReference type="Pfam" id="PF02629">
    <property type="entry name" value="CoA_binding"/>
    <property type="match status" value="1"/>
</dbReference>
<dbReference type="Pfam" id="PF00549">
    <property type="entry name" value="Ligase_CoA"/>
    <property type="match status" value="1"/>
</dbReference>
<dbReference type="PIRSF" id="PIRSF001553">
    <property type="entry name" value="SucCS_alpha"/>
    <property type="match status" value="1"/>
</dbReference>
<dbReference type="PRINTS" id="PR01798">
    <property type="entry name" value="SCOASYNTHASE"/>
</dbReference>
<dbReference type="SMART" id="SM00881">
    <property type="entry name" value="CoA_binding"/>
    <property type="match status" value="1"/>
</dbReference>
<dbReference type="SUPFAM" id="SSF51735">
    <property type="entry name" value="NAD(P)-binding Rossmann-fold domains"/>
    <property type="match status" value="1"/>
</dbReference>
<dbReference type="SUPFAM" id="SSF52210">
    <property type="entry name" value="Succinyl-CoA synthetase domains"/>
    <property type="match status" value="1"/>
</dbReference>
<dbReference type="PROSITE" id="PS01216">
    <property type="entry name" value="SUCCINYL_COA_LIG_1"/>
    <property type="match status" value="1"/>
</dbReference>
<dbReference type="PROSITE" id="PS00399">
    <property type="entry name" value="SUCCINYL_COA_LIG_2"/>
    <property type="match status" value="1"/>
</dbReference>
<protein>
    <recommendedName>
        <fullName evidence="1 7">Succinate--CoA ligase [ADP-forming] subunit alpha, mitochondrial</fullName>
        <ecNumber evidence="1 5">6.2.1.5</ecNumber>
    </recommendedName>
    <alternativeName>
        <fullName evidence="1">Succinyl-CoA synthetase subunit alpha</fullName>
        <shortName evidence="1">SCS-alpha</shortName>
    </alternativeName>
</protein>